<dbReference type="EMBL" id="CP000025">
    <property type="protein sequence ID" value="AAW35540.1"/>
    <property type="molecule type" value="Genomic_DNA"/>
</dbReference>
<dbReference type="RefSeq" id="WP_002852982.1">
    <property type="nucleotide sequence ID" value="NC_003912.7"/>
</dbReference>
<dbReference type="SMR" id="Q5HU29"/>
<dbReference type="KEGG" id="cjr:CJE1218"/>
<dbReference type="HOGENOM" id="CLU_112356_2_0_7"/>
<dbReference type="GO" id="GO:0005737">
    <property type="term" value="C:cytoplasm"/>
    <property type="evidence" value="ECO:0007669"/>
    <property type="project" value="UniProtKB-SubCell"/>
</dbReference>
<dbReference type="GO" id="GO:0044780">
    <property type="term" value="P:bacterial-type flagellum assembly"/>
    <property type="evidence" value="ECO:0007669"/>
    <property type="project" value="UniProtKB-UniRule"/>
</dbReference>
<dbReference type="GO" id="GO:0006417">
    <property type="term" value="P:regulation of translation"/>
    <property type="evidence" value="ECO:0007669"/>
    <property type="project" value="UniProtKB-KW"/>
</dbReference>
<dbReference type="Gene3D" id="2.30.290.10">
    <property type="entry name" value="BH3618-like"/>
    <property type="match status" value="1"/>
</dbReference>
<dbReference type="HAMAP" id="MF_01185">
    <property type="entry name" value="FliW"/>
    <property type="match status" value="1"/>
</dbReference>
<dbReference type="InterPro" id="IPR003775">
    <property type="entry name" value="Flagellar_assembly_factor_FliW"/>
</dbReference>
<dbReference type="InterPro" id="IPR024046">
    <property type="entry name" value="Flagellar_assmbl_FliW_dom_sf"/>
</dbReference>
<dbReference type="NCBIfam" id="NF009790">
    <property type="entry name" value="PRK13282.1"/>
    <property type="match status" value="1"/>
</dbReference>
<dbReference type="PANTHER" id="PTHR39190">
    <property type="entry name" value="FLAGELLAR ASSEMBLY FACTOR FLIW"/>
    <property type="match status" value="1"/>
</dbReference>
<dbReference type="PANTHER" id="PTHR39190:SF1">
    <property type="entry name" value="FLAGELLAR ASSEMBLY FACTOR FLIW"/>
    <property type="match status" value="1"/>
</dbReference>
<dbReference type="Pfam" id="PF02623">
    <property type="entry name" value="FliW"/>
    <property type="match status" value="1"/>
</dbReference>
<dbReference type="SUPFAM" id="SSF141457">
    <property type="entry name" value="BH3618-like"/>
    <property type="match status" value="1"/>
</dbReference>
<protein>
    <recommendedName>
        <fullName evidence="1">Flagellar assembly factor FliW</fullName>
    </recommendedName>
</protein>
<name>FLIW_CAMJR</name>
<evidence type="ECO:0000255" key="1">
    <source>
        <dbReference type="HAMAP-Rule" id="MF_01185"/>
    </source>
</evidence>
<accession>Q5HU29</accession>
<organism>
    <name type="scientific">Campylobacter jejuni (strain RM1221)</name>
    <dbReference type="NCBI Taxonomy" id="195099"/>
    <lineage>
        <taxon>Bacteria</taxon>
        <taxon>Pseudomonadati</taxon>
        <taxon>Campylobacterota</taxon>
        <taxon>Epsilonproteobacteria</taxon>
        <taxon>Campylobacterales</taxon>
        <taxon>Campylobacteraceae</taxon>
        <taxon>Campylobacter</taxon>
    </lineage>
</organism>
<keyword id="KW-1005">Bacterial flagellum biogenesis</keyword>
<keyword id="KW-0143">Chaperone</keyword>
<keyword id="KW-0963">Cytoplasm</keyword>
<keyword id="KW-0810">Translation regulation</keyword>
<feature type="chain" id="PRO_0000272976" description="Flagellar assembly factor FliW">
    <location>
        <begin position="1"/>
        <end position="129"/>
    </location>
</feature>
<reference key="1">
    <citation type="journal article" date="2005" name="PLoS Biol.">
        <title>Major structural differences and novel potential virulence mechanisms from the genomes of multiple Campylobacter species.</title>
        <authorList>
            <person name="Fouts D.E."/>
            <person name="Mongodin E.F."/>
            <person name="Mandrell R.E."/>
            <person name="Miller W.G."/>
            <person name="Rasko D.A."/>
            <person name="Ravel J."/>
            <person name="Brinkac L.M."/>
            <person name="DeBoy R.T."/>
            <person name="Parker C.T."/>
            <person name="Daugherty S.C."/>
            <person name="Dodson R.J."/>
            <person name="Durkin A.S."/>
            <person name="Madupu R."/>
            <person name="Sullivan S.A."/>
            <person name="Shetty J.U."/>
            <person name="Ayodeji M.A."/>
            <person name="Shvartsbeyn A."/>
            <person name="Schatz M.C."/>
            <person name="Badger J.H."/>
            <person name="Fraser C.M."/>
            <person name="Nelson K.E."/>
        </authorList>
    </citation>
    <scope>NUCLEOTIDE SEQUENCE [LARGE SCALE GENOMIC DNA]</scope>
    <source>
        <strain>RM1221</strain>
    </source>
</reference>
<proteinExistence type="inferred from homology"/>
<sequence>MTLAVKCPILGFEETKNMEFSTIDEVFVRLKSLDGKDFSFVLINPYLIRPDYEFDIPTYYQELLSLTPESNMKIFNIVAIAKSIEESTVNFLAPVVINLDNNTMVQVILDTVNYPDFFQADQIANYIKK</sequence>
<comment type="function">
    <text evidence="1">Acts as an anti-CsrA protein, binds CsrA and prevents it from repressing translation of its target genes, one of which is flagellin. Binds to flagellin and participates in the assembly of the flagellum.</text>
</comment>
<comment type="subunit">
    <text evidence="1">Interacts with translational regulator CsrA and flagellin(s).</text>
</comment>
<comment type="subcellular location">
    <subcellularLocation>
        <location evidence="1">Cytoplasm</location>
    </subcellularLocation>
</comment>
<comment type="similarity">
    <text evidence="1">Belongs to the FliW family.</text>
</comment>
<gene>
    <name evidence="1" type="primary">fliW</name>
    <name type="ordered locus">CJE1218</name>
</gene>